<name>HIS4_METLZ</name>
<proteinExistence type="inferred from homology"/>
<gene>
    <name evidence="1" type="primary">hisA</name>
    <name type="ordered locus">Mlab_0492</name>
</gene>
<organism>
    <name type="scientific">Methanocorpusculum labreanum (strain ATCC 43576 / DSM 4855 / Z)</name>
    <dbReference type="NCBI Taxonomy" id="410358"/>
    <lineage>
        <taxon>Archaea</taxon>
        <taxon>Methanobacteriati</taxon>
        <taxon>Methanobacteriota</taxon>
        <taxon>Stenosarchaea group</taxon>
        <taxon>Methanomicrobia</taxon>
        <taxon>Methanomicrobiales</taxon>
        <taxon>Methanocorpusculaceae</taxon>
        <taxon>Methanocorpusculum</taxon>
    </lineage>
</organism>
<reference key="1">
    <citation type="journal article" date="2009" name="Stand. Genomic Sci.">
        <title>Complete genome sequence of Methanocorpusculum labreanum type strain Z.</title>
        <authorList>
            <person name="Anderson I.J."/>
            <person name="Sieprawska-Lupa M."/>
            <person name="Goltsman E."/>
            <person name="Lapidus A."/>
            <person name="Copeland A."/>
            <person name="Glavina Del Rio T."/>
            <person name="Tice H."/>
            <person name="Dalin E."/>
            <person name="Barry K."/>
            <person name="Pitluck S."/>
            <person name="Hauser L."/>
            <person name="Land M."/>
            <person name="Lucas S."/>
            <person name="Richardson P."/>
            <person name="Whitman W.B."/>
            <person name="Kyrpides N.C."/>
        </authorList>
    </citation>
    <scope>NUCLEOTIDE SEQUENCE [LARGE SCALE GENOMIC DNA]</scope>
    <source>
        <strain>ATCC 43576 / DSM 4855 / Z</strain>
    </source>
</reference>
<sequence>MEVFPAVDILSGNCVQLVGGDRLTATVYGSPMDNARRWISEGASNLHVVNLDGAFTASTTNAEMIREVVEKTDVFVQVGGGIRSLEDARGWLNCGVARIILSTFATREPAVIRTLSKEFGSERIMAGVDARRGEIAVSGWQELAGDFIVWAQKFEELGAGSLLYTNVDVEGQQAGIDIEPVQKLLDAVDIPVIVAGGVTTSQDVTALKQLGASGCVLGSALYSGRITLKEALEAAV</sequence>
<protein>
    <recommendedName>
        <fullName evidence="1">1-(5-phosphoribosyl)-5-[(5-phosphoribosylamino)methylideneamino] imidazole-4-carboxamide isomerase</fullName>
        <ecNumber evidence="1">5.3.1.16</ecNumber>
    </recommendedName>
    <alternativeName>
        <fullName evidence="1">Phosphoribosylformimino-5-aminoimidazole carboxamide ribotide isomerase</fullName>
    </alternativeName>
</protein>
<dbReference type="EC" id="5.3.1.16" evidence="1"/>
<dbReference type="EMBL" id="CP000559">
    <property type="protein sequence ID" value="ABN06666.1"/>
    <property type="molecule type" value="Genomic_DNA"/>
</dbReference>
<dbReference type="RefSeq" id="WP_011832867.1">
    <property type="nucleotide sequence ID" value="NC_008942.1"/>
</dbReference>
<dbReference type="SMR" id="A2SQR0"/>
<dbReference type="STRING" id="410358.Mlab_0492"/>
<dbReference type="GeneID" id="4795027"/>
<dbReference type="KEGG" id="mla:Mlab_0492"/>
<dbReference type="eggNOG" id="arCOG00618">
    <property type="taxonomic scope" value="Archaea"/>
</dbReference>
<dbReference type="HOGENOM" id="CLU_048577_1_1_2"/>
<dbReference type="OrthoDB" id="52866at2157"/>
<dbReference type="UniPathway" id="UPA00031">
    <property type="reaction ID" value="UER00009"/>
</dbReference>
<dbReference type="Proteomes" id="UP000000365">
    <property type="component" value="Chromosome"/>
</dbReference>
<dbReference type="GO" id="GO:0005737">
    <property type="term" value="C:cytoplasm"/>
    <property type="evidence" value="ECO:0007669"/>
    <property type="project" value="UniProtKB-SubCell"/>
</dbReference>
<dbReference type="GO" id="GO:0003949">
    <property type="term" value="F:1-(5-phosphoribosyl)-5-[(5-phosphoribosylamino)methylideneamino]imidazole-4-carboxamide isomerase activity"/>
    <property type="evidence" value="ECO:0007669"/>
    <property type="project" value="UniProtKB-UniRule"/>
</dbReference>
<dbReference type="GO" id="GO:0000105">
    <property type="term" value="P:L-histidine biosynthetic process"/>
    <property type="evidence" value="ECO:0007669"/>
    <property type="project" value="UniProtKB-UniRule"/>
</dbReference>
<dbReference type="GO" id="GO:0000162">
    <property type="term" value="P:L-tryptophan biosynthetic process"/>
    <property type="evidence" value="ECO:0007669"/>
    <property type="project" value="TreeGrafter"/>
</dbReference>
<dbReference type="CDD" id="cd04732">
    <property type="entry name" value="HisA"/>
    <property type="match status" value="1"/>
</dbReference>
<dbReference type="FunFam" id="3.20.20.70:FF:000009">
    <property type="entry name" value="1-(5-phosphoribosyl)-5-[(5-phosphoribosylamino)methylideneamino] imidazole-4-carboxamide isomerase"/>
    <property type="match status" value="1"/>
</dbReference>
<dbReference type="Gene3D" id="3.20.20.70">
    <property type="entry name" value="Aldolase class I"/>
    <property type="match status" value="1"/>
</dbReference>
<dbReference type="HAMAP" id="MF_01014">
    <property type="entry name" value="HisA"/>
    <property type="match status" value="1"/>
</dbReference>
<dbReference type="InterPro" id="IPR013785">
    <property type="entry name" value="Aldolase_TIM"/>
</dbReference>
<dbReference type="InterPro" id="IPR006062">
    <property type="entry name" value="His_biosynth"/>
</dbReference>
<dbReference type="InterPro" id="IPR006063">
    <property type="entry name" value="HisA_bact_arch"/>
</dbReference>
<dbReference type="InterPro" id="IPR044524">
    <property type="entry name" value="Isoase_HisA-like"/>
</dbReference>
<dbReference type="InterPro" id="IPR023016">
    <property type="entry name" value="Isoase_HisA-like_bact"/>
</dbReference>
<dbReference type="InterPro" id="IPR011060">
    <property type="entry name" value="RibuloseP-bd_barrel"/>
</dbReference>
<dbReference type="NCBIfam" id="TIGR00007">
    <property type="entry name" value="1-(5-phosphoribosyl)-5-[(5-phosphoribosylamino)methylideneamino]imidazole-4-carboxamide isomerase"/>
    <property type="match status" value="1"/>
</dbReference>
<dbReference type="NCBIfam" id="NF010112">
    <property type="entry name" value="PRK13585.1"/>
    <property type="match status" value="1"/>
</dbReference>
<dbReference type="PANTHER" id="PTHR43090">
    <property type="entry name" value="1-(5-PHOSPHORIBOSYL)-5-[(5-PHOSPHORIBOSYLAMINO)METHYLIDENEAMINO] IMIDAZOLE-4-CARBOXAMIDE ISOMERASE"/>
    <property type="match status" value="1"/>
</dbReference>
<dbReference type="PANTHER" id="PTHR43090:SF7">
    <property type="entry name" value="1-(5-PHOSPHORIBOSYL)-5-[(5-PHOSPHORIBOSYLAMINO)METHYLIDENEAMINO] IMIDAZOLE-4-CARBOXAMIDE ISOMERASE"/>
    <property type="match status" value="1"/>
</dbReference>
<dbReference type="Pfam" id="PF00977">
    <property type="entry name" value="His_biosynth"/>
    <property type="match status" value="1"/>
</dbReference>
<dbReference type="SUPFAM" id="SSF51366">
    <property type="entry name" value="Ribulose-phoshate binding barrel"/>
    <property type="match status" value="1"/>
</dbReference>
<keyword id="KW-0028">Amino-acid biosynthesis</keyword>
<keyword id="KW-0963">Cytoplasm</keyword>
<keyword id="KW-0368">Histidine biosynthesis</keyword>
<keyword id="KW-0413">Isomerase</keyword>
<keyword id="KW-1185">Reference proteome</keyword>
<accession>A2SQR0</accession>
<evidence type="ECO:0000255" key="1">
    <source>
        <dbReference type="HAMAP-Rule" id="MF_01014"/>
    </source>
</evidence>
<feature type="chain" id="PRO_0000290574" description="1-(5-phosphoribosyl)-5-[(5-phosphoribosylamino)methylideneamino] imidazole-4-carboxamide isomerase">
    <location>
        <begin position="1"/>
        <end position="236"/>
    </location>
</feature>
<feature type="active site" description="Proton acceptor" evidence="1">
    <location>
        <position position="8"/>
    </location>
</feature>
<feature type="active site" description="Proton donor" evidence="1">
    <location>
        <position position="129"/>
    </location>
</feature>
<comment type="catalytic activity">
    <reaction evidence="1">
        <text>1-(5-phospho-beta-D-ribosyl)-5-[(5-phospho-beta-D-ribosylamino)methylideneamino]imidazole-4-carboxamide = 5-[(5-phospho-1-deoxy-D-ribulos-1-ylimino)methylamino]-1-(5-phospho-beta-D-ribosyl)imidazole-4-carboxamide</text>
        <dbReference type="Rhea" id="RHEA:15469"/>
        <dbReference type="ChEBI" id="CHEBI:58435"/>
        <dbReference type="ChEBI" id="CHEBI:58525"/>
        <dbReference type="EC" id="5.3.1.16"/>
    </reaction>
</comment>
<comment type="pathway">
    <text evidence="1">Amino-acid biosynthesis; L-histidine biosynthesis; L-histidine from 5-phospho-alpha-D-ribose 1-diphosphate: step 4/9.</text>
</comment>
<comment type="subcellular location">
    <subcellularLocation>
        <location evidence="1">Cytoplasm</location>
    </subcellularLocation>
</comment>
<comment type="similarity">
    <text evidence="1">Belongs to the HisA/HisF family.</text>
</comment>